<dbReference type="EC" id="4.2.1.20"/>
<dbReference type="EMBL" id="BA000011">
    <property type="protein sequence ID" value="BAB60101.1"/>
    <property type="molecule type" value="Genomic_DNA"/>
</dbReference>
<dbReference type="SMR" id="Q97A51"/>
<dbReference type="STRING" id="273116.gene:9381751"/>
<dbReference type="PaxDb" id="273116-14325176"/>
<dbReference type="KEGG" id="tvo:TVG0983765"/>
<dbReference type="eggNOG" id="arCOG01432">
    <property type="taxonomic scope" value="Archaea"/>
</dbReference>
<dbReference type="HOGENOM" id="CLU_042858_1_0_2"/>
<dbReference type="OrthoDB" id="371827at2157"/>
<dbReference type="PhylomeDB" id="Q97A51"/>
<dbReference type="UniPathway" id="UPA00035">
    <property type="reaction ID" value="UER00044"/>
</dbReference>
<dbReference type="Proteomes" id="UP000001017">
    <property type="component" value="Chromosome"/>
</dbReference>
<dbReference type="GO" id="GO:0005737">
    <property type="term" value="C:cytoplasm"/>
    <property type="evidence" value="ECO:0007669"/>
    <property type="project" value="TreeGrafter"/>
</dbReference>
<dbReference type="GO" id="GO:0052684">
    <property type="term" value="F:L-serine hydro-lyase (adding indole, L-tryptophan-forming) activity"/>
    <property type="evidence" value="ECO:0007669"/>
    <property type="project" value="TreeGrafter"/>
</dbReference>
<dbReference type="GO" id="GO:0030170">
    <property type="term" value="F:pyridoxal phosphate binding"/>
    <property type="evidence" value="ECO:0007669"/>
    <property type="project" value="InterPro"/>
</dbReference>
<dbReference type="GO" id="GO:0004834">
    <property type="term" value="F:tryptophan synthase activity"/>
    <property type="evidence" value="ECO:0007669"/>
    <property type="project" value="UniProtKB-UniRule"/>
</dbReference>
<dbReference type="Gene3D" id="3.40.50.1100">
    <property type="match status" value="2"/>
</dbReference>
<dbReference type="HAMAP" id="MF_00133">
    <property type="entry name" value="Trp_synth_beta"/>
    <property type="match status" value="1"/>
</dbReference>
<dbReference type="InterPro" id="IPR006316">
    <property type="entry name" value="Trp_synth_b-like"/>
</dbReference>
<dbReference type="InterPro" id="IPR006653">
    <property type="entry name" value="Trp_synth_b_CS"/>
</dbReference>
<dbReference type="InterPro" id="IPR023026">
    <property type="entry name" value="Trp_synth_beta/beta-like"/>
</dbReference>
<dbReference type="InterPro" id="IPR001926">
    <property type="entry name" value="TrpB-like_PALP"/>
</dbReference>
<dbReference type="InterPro" id="IPR036052">
    <property type="entry name" value="TrpB-like_PALP_sf"/>
</dbReference>
<dbReference type="NCBIfam" id="NF009057">
    <property type="entry name" value="PRK12391.1"/>
    <property type="match status" value="1"/>
</dbReference>
<dbReference type="NCBIfam" id="TIGR01415">
    <property type="entry name" value="trpB_rel"/>
    <property type="match status" value="1"/>
</dbReference>
<dbReference type="PANTHER" id="PTHR48077:SF6">
    <property type="entry name" value="TRYPTOPHAN SYNTHASE"/>
    <property type="match status" value="1"/>
</dbReference>
<dbReference type="PANTHER" id="PTHR48077">
    <property type="entry name" value="TRYPTOPHAN SYNTHASE-RELATED"/>
    <property type="match status" value="1"/>
</dbReference>
<dbReference type="Pfam" id="PF00291">
    <property type="entry name" value="PALP"/>
    <property type="match status" value="1"/>
</dbReference>
<dbReference type="PIRSF" id="PIRSF001413">
    <property type="entry name" value="Trp_syn_beta"/>
    <property type="match status" value="1"/>
</dbReference>
<dbReference type="PIRSF" id="PIRSF500824">
    <property type="entry name" value="TrpB_prok"/>
    <property type="match status" value="1"/>
</dbReference>
<dbReference type="SUPFAM" id="SSF53686">
    <property type="entry name" value="Tryptophan synthase beta subunit-like PLP-dependent enzymes"/>
    <property type="match status" value="1"/>
</dbReference>
<dbReference type="PROSITE" id="PS00168">
    <property type="entry name" value="TRP_SYNTHASE_BETA"/>
    <property type="match status" value="1"/>
</dbReference>
<proteinExistence type="inferred from homology"/>
<name>TRPB_THEVO</name>
<keyword id="KW-0028">Amino-acid biosynthesis</keyword>
<keyword id="KW-0057">Aromatic amino acid biosynthesis</keyword>
<keyword id="KW-0456">Lyase</keyword>
<keyword id="KW-0663">Pyridoxal phosphate</keyword>
<keyword id="KW-0822">Tryptophan biosynthesis</keyword>
<feature type="chain" id="PRO_0000099060" description="Tryptophan synthase beta chain">
    <location>
        <begin position="1"/>
        <end position="426"/>
    </location>
</feature>
<feature type="modified residue" description="N6-(pyridoxal phosphate)lysine" evidence="1">
    <location>
        <position position="108"/>
    </location>
</feature>
<comment type="function">
    <text evidence="1">The beta subunit is responsible for the synthesis of L-tryptophan from indole and L-serine.</text>
</comment>
<comment type="catalytic activity">
    <reaction>
        <text>(1S,2R)-1-C-(indol-3-yl)glycerol 3-phosphate + L-serine = D-glyceraldehyde 3-phosphate + L-tryptophan + H2O</text>
        <dbReference type="Rhea" id="RHEA:10532"/>
        <dbReference type="ChEBI" id="CHEBI:15377"/>
        <dbReference type="ChEBI" id="CHEBI:33384"/>
        <dbReference type="ChEBI" id="CHEBI:57912"/>
        <dbReference type="ChEBI" id="CHEBI:58866"/>
        <dbReference type="ChEBI" id="CHEBI:59776"/>
        <dbReference type="EC" id="4.2.1.20"/>
    </reaction>
</comment>
<comment type="cofactor">
    <cofactor evidence="1">
        <name>pyridoxal 5'-phosphate</name>
        <dbReference type="ChEBI" id="CHEBI:597326"/>
    </cofactor>
</comment>
<comment type="pathway">
    <text>Amino-acid biosynthesis; L-tryptophan biosynthesis; L-tryptophan from chorismate: step 5/5.</text>
</comment>
<comment type="subunit">
    <text evidence="1">Tetramer of two alpha and two beta chains.</text>
</comment>
<comment type="similarity">
    <text evidence="2">Belongs to the TrpB family.</text>
</comment>
<protein>
    <recommendedName>
        <fullName>Tryptophan synthase beta chain</fullName>
        <ecNumber>4.2.1.20</ecNumber>
    </recommendedName>
</protein>
<reference key="1">
    <citation type="journal article" date="2000" name="Proc. Natl. Acad. Sci. U.S.A.">
        <title>Archaeal adaptation to higher temperatures revealed by genomic sequence of Thermoplasma volcanium.</title>
        <authorList>
            <person name="Kawashima T."/>
            <person name="Amano N."/>
            <person name="Koike H."/>
            <person name="Makino S."/>
            <person name="Higuchi S."/>
            <person name="Kawashima-Ohya Y."/>
            <person name="Watanabe K."/>
            <person name="Yamazaki M."/>
            <person name="Kanehori K."/>
            <person name="Kawamoto T."/>
            <person name="Nunoshiba T."/>
            <person name="Yamamoto Y."/>
            <person name="Aramaki H."/>
            <person name="Makino K."/>
            <person name="Suzuki M."/>
        </authorList>
    </citation>
    <scope>NUCLEOTIDE SEQUENCE [LARGE SCALE GENOMIC DNA]</scope>
    <source>
        <strain>ATCC 51530 / DSM 4299 / JCM 9571 / NBRC 15438 / GSS1</strain>
    </source>
</reference>
<accession>Q97A51</accession>
<gene>
    <name type="primary">trpB</name>
    <name type="ordered locus">TV0959</name>
    <name type="ORF">TVG0983765</name>
</gene>
<sequence length="426" mass="47544">MIRIDLKQDDMPDHWYNILPDLPEELPTPRDETGEAFETLKKAVPTKVLEYEFSGERYPKIPGEIYEKYMQVGRPTPIIRAKNLEEFLGGNIKIYLKMESYTYSGSHKINSALAHVFFAKQDNAKFVSTETGAGQWGSAVALASALFGVDSHIFMVRTSFYAKPYRKYMMYMYGAHPHPSPSEFTEYGKEVLKKNPDTPGSLGLAISEAIHYALDNGGKYIAGSVINSDILFKTIAGMEAKKQMEMAGEDPDYVVGVVGGGSNYAALAFPFLADELQSGKVKRTYIASGSKEVPKMTEGEYRYDYPDTGKVLPLLKMYTIGYDFIPPAVYAGGLRYHAVAPTLSLLMNKGIVQARDYDQEEAFKWARIFSEKEGYIPAPETSHALPILKEIADSNRGEREKKTVLVSFSGHGLLDLGNYAEAMHFE</sequence>
<organism>
    <name type="scientific">Thermoplasma volcanium (strain ATCC 51530 / DSM 4299 / JCM 9571 / NBRC 15438 / GSS1)</name>
    <dbReference type="NCBI Taxonomy" id="273116"/>
    <lineage>
        <taxon>Archaea</taxon>
        <taxon>Methanobacteriati</taxon>
        <taxon>Thermoplasmatota</taxon>
        <taxon>Thermoplasmata</taxon>
        <taxon>Thermoplasmatales</taxon>
        <taxon>Thermoplasmataceae</taxon>
        <taxon>Thermoplasma</taxon>
    </lineage>
</organism>
<evidence type="ECO:0000250" key="1"/>
<evidence type="ECO:0000305" key="2"/>